<protein>
    <recommendedName>
        <fullName evidence="1">Large ribosomal subunit protein uL22</fullName>
    </recommendedName>
    <alternativeName>
        <fullName evidence="2">50S ribosomal protein L22</fullName>
    </alternativeName>
</protein>
<reference key="1">
    <citation type="journal article" date="2006" name="Genome Biol.">
        <title>Genomic analysis reveals that Pseudomonas aeruginosa virulence is combinatorial.</title>
        <authorList>
            <person name="Lee D.G."/>
            <person name="Urbach J.M."/>
            <person name="Wu G."/>
            <person name="Liberati N.T."/>
            <person name="Feinbaum R.L."/>
            <person name="Miyata S."/>
            <person name="Diggins L.T."/>
            <person name="He J."/>
            <person name="Saucier M."/>
            <person name="Deziel E."/>
            <person name="Friedman L."/>
            <person name="Li L."/>
            <person name="Grills G."/>
            <person name="Montgomery K."/>
            <person name="Kucherlapati R."/>
            <person name="Rahme L.G."/>
            <person name="Ausubel F.M."/>
        </authorList>
    </citation>
    <scope>NUCLEOTIDE SEQUENCE [LARGE SCALE GENOMIC DNA]</scope>
    <source>
        <strain>UCBPP-PA14</strain>
    </source>
</reference>
<gene>
    <name evidence="1" type="primary">rplV</name>
    <name type="ordered locus">PA14_08900</name>
</gene>
<keyword id="KW-0687">Ribonucleoprotein</keyword>
<keyword id="KW-0689">Ribosomal protein</keyword>
<keyword id="KW-0694">RNA-binding</keyword>
<keyword id="KW-0699">rRNA-binding</keyword>
<evidence type="ECO:0000255" key="1">
    <source>
        <dbReference type="HAMAP-Rule" id="MF_01331"/>
    </source>
</evidence>
<evidence type="ECO:0000305" key="2"/>
<feature type="chain" id="PRO_1000052628" description="Large ribosomal subunit protein uL22">
    <location>
        <begin position="1"/>
        <end position="110"/>
    </location>
</feature>
<proteinExistence type="inferred from homology"/>
<name>RL22_PSEAB</name>
<comment type="function">
    <text evidence="1">This protein binds specifically to 23S rRNA; its binding is stimulated by other ribosomal proteins, e.g. L4, L17, and L20. It is important during the early stages of 50S assembly. It makes multiple contacts with different domains of the 23S rRNA in the assembled 50S subunit and ribosome (By similarity).</text>
</comment>
<comment type="function">
    <text evidence="1">The globular domain of the protein is located near the polypeptide exit tunnel on the outside of the subunit, while an extended beta-hairpin is found that lines the wall of the exit tunnel in the center of the 70S ribosome.</text>
</comment>
<comment type="subunit">
    <text evidence="1">Part of the 50S ribosomal subunit.</text>
</comment>
<comment type="similarity">
    <text evidence="1">Belongs to the universal ribosomal protein uL22 family.</text>
</comment>
<sequence length="110" mass="11911">MEVAAKLSGARISAQKARLVADQIRGKKVGEALNLLAFSSKKAAEIMKKVLESAVANAEHNEGADVDDLKVSTVFVNEGRSLKRIMPRAKGRADRIVKRSCHITVKVADK</sequence>
<organism>
    <name type="scientific">Pseudomonas aeruginosa (strain UCBPP-PA14)</name>
    <dbReference type="NCBI Taxonomy" id="208963"/>
    <lineage>
        <taxon>Bacteria</taxon>
        <taxon>Pseudomonadati</taxon>
        <taxon>Pseudomonadota</taxon>
        <taxon>Gammaproteobacteria</taxon>
        <taxon>Pseudomonadales</taxon>
        <taxon>Pseudomonadaceae</taxon>
        <taxon>Pseudomonas</taxon>
    </lineage>
</organism>
<dbReference type="EMBL" id="CP000438">
    <property type="protein sequence ID" value="ABJ13529.1"/>
    <property type="molecule type" value="Genomic_DNA"/>
</dbReference>
<dbReference type="RefSeq" id="WP_003103908.1">
    <property type="nucleotide sequence ID" value="NZ_CP034244.1"/>
</dbReference>
<dbReference type="SMR" id="Q02T75"/>
<dbReference type="GeneID" id="98636788"/>
<dbReference type="KEGG" id="pau:PA14_08900"/>
<dbReference type="PseudoCAP" id="PA14_08900"/>
<dbReference type="HOGENOM" id="CLU_083987_3_3_6"/>
<dbReference type="BioCyc" id="PAER208963:G1G74-741-MONOMER"/>
<dbReference type="Proteomes" id="UP000000653">
    <property type="component" value="Chromosome"/>
</dbReference>
<dbReference type="GO" id="GO:0022625">
    <property type="term" value="C:cytosolic large ribosomal subunit"/>
    <property type="evidence" value="ECO:0007669"/>
    <property type="project" value="TreeGrafter"/>
</dbReference>
<dbReference type="GO" id="GO:0019843">
    <property type="term" value="F:rRNA binding"/>
    <property type="evidence" value="ECO:0007669"/>
    <property type="project" value="UniProtKB-UniRule"/>
</dbReference>
<dbReference type="GO" id="GO:0003735">
    <property type="term" value="F:structural constituent of ribosome"/>
    <property type="evidence" value="ECO:0007669"/>
    <property type="project" value="InterPro"/>
</dbReference>
<dbReference type="GO" id="GO:0006412">
    <property type="term" value="P:translation"/>
    <property type="evidence" value="ECO:0007669"/>
    <property type="project" value="UniProtKB-UniRule"/>
</dbReference>
<dbReference type="CDD" id="cd00336">
    <property type="entry name" value="Ribosomal_L22"/>
    <property type="match status" value="1"/>
</dbReference>
<dbReference type="FunFam" id="3.90.470.10:FF:000001">
    <property type="entry name" value="50S ribosomal protein L22"/>
    <property type="match status" value="1"/>
</dbReference>
<dbReference type="Gene3D" id="3.90.470.10">
    <property type="entry name" value="Ribosomal protein L22/L17"/>
    <property type="match status" value="1"/>
</dbReference>
<dbReference type="HAMAP" id="MF_01331_B">
    <property type="entry name" value="Ribosomal_uL22_B"/>
    <property type="match status" value="1"/>
</dbReference>
<dbReference type="InterPro" id="IPR001063">
    <property type="entry name" value="Ribosomal_uL22"/>
</dbReference>
<dbReference type="InterPro" id="IPR005727">
    <property type="entry name" value="Ribosomal_uL22_bac/chlpt-type"/>
</dbReference>
<dbReference type="InterPro" id="IPR047867">
    <property type="entry name" value="Ribosomal_uL22_bac/org-type"/>
</dbReference>
<dbReference type="InterPro" id="IPR018260">
    <property type="entry name" value="Ribosomal_uL22_CS"/>
</dbReference>
<dbReference type="InterPro" id="IPR036394">
    <property type="entry name" value="Ribosomal_uL22_sf"/>
</dbReference>
<dbReference type="NCBIfam" id="TIGR01044">
    <property type="entry name" value="rplV_bact"/>
    <property type="match status" value="1"/>
</dbReference>
<dbReference type="PANTHER" id="PTHR13501">
    <property type="entry name" value="CHLOROPLAST 50S RIBOSOMAL PROTEIN L22-RELATED"/>
    <property type="match status" value="1"/>
</dbReference>
<dbReference type="PANTHER" id="PTHR13501:SF8">
    <property type="entry name" value="LARGE RIBOSOMAL SUBUNIT PROTEIN UL22M"/>
    <property type="match status" value="1"/>
</dbReference>
<dbReference type="Pfam" id="PF00237">
    <property type="entry name" value="Ribosomal_L22"/>
    <property type="match status" value="1"/>
</dbReference>
<dbReference type="SUPFAM" id="SSF54843">
    <property type="entry name" value="Ribosomal protein L22"/>
    <property type="match status" value="1"/>
</dbReference>
<dbReference type="PROSITE" id="PS00464">
    <property type="entry name" value="RIBOSOMAL_L22"/>
    <property type="match status" value="1"/>
</dbReference>
<accession>Q02T75</accession>